<gene>
    <name type="primary">pinE</name>
    <name type="synonym">pin</name>
    <name type="ordered locus">b1158</name>
    <name type="ordered locus">JW1144</name>
</gene>
<accession>P03014</accession>
<keyword id="KW-0229">DNA integration</keyword>
<keyword id="KW-0230">DNA invertase</keyword>
<keyword id="KW-0233">DNA recombination</keyword>
<keyword id="KW-0238">DNA-binding</keyword>
<keyword id="KW-0378">Hydrolase</keyword>
<keyword id="KW-0436">Ligase</keyword>
<keyword id="KW-1185">Reference proteome</keyword>
<feature type="chain" id="PRO_0000196360" description="Serine recombinase PinE">
    <location>
        <begin position="1"/>
        <end position="184"/>
    </location>
</feature>
<feature type="domain" description="Resolvase/invertase-type recombinase catalytic" evidence="3">
    <location>
        <begin position="1"/>
        <end position="134"/>
    </location>
</feature>
<feature type="DNA-binding region" description="H-T-H motif" evidence="2">
    <location>
        <begin position="161"/>
        <end position="180"/>
    </location>
</feature>
<feature type="active site" description="O-(5'-phospho-DNA)-serine intermediate" evidence="3">
    <location>
        <position position="9"/>
    </location>
</feature>
<feature type="sequence conflict" description="In Ref. 1; CAA25948." evidence="4" ref="1">
    <original>R</original>
    <variation>T</variation>
    <location>
        <position position="178"/>
    </location>
</feature>
<comment type="function">
    <text>This protein catalyzes the inversion of an 1800-bp E.coli DNA fragment, the P region, which can exist in either orientation. The function of the inversion is not yet clear.</text>
</comment>
<comment type="similarity">
    <text evidence="4">Belongs to the site-specific recombinase resolvase family.</text>
</comment>
<protein>
    <recommendedName>
        <fullName evidence="1">Serine recombinase PinE</fullName>
        <ecNumber>3.1.22.-</ecNumber>
        <ecNumber>6.5.1.-</ecNumber>
    </recommendedName>
    <alternativeName>
        <fullName evidence="4">DNA-invertase PinE</fullName>
        <shortName>DNA-invertase from lambdoid prophage e14</shortName>
    </alternativeName>
    <alternativeName>
        <fullName evidence="4">Site-specific recombinase PinE</fullName>
    </alternativeName>
</protein>
<dbReference type="EC" id="3.1.22.-"/>
<dbReference type="EC" id="6.5.1.-"/>
<dbReference type="EMBL" id="K00676">
    <property type="protein sequence ID" value="AAA24391.1"/>
    <property type="molecule type" value="Genomic_DNA"/>
</dbReference>
<dbReference type="EMBL" id="X01805">
    <property type="protein sequence ID" value="CAA25948.1"/>
    <property type="molecule type" value="Genomic_DNA"/>
</dbReference>
<dbReference type="EMBL" id="U00096">
    <property type="protein sequence ID" value="AAC74242.1"/>
    <property type="molecule type" value="Genomic_DNA"/>
</dbReference>
<dbReference type="EMBL" id="AP009048">
    <property type="protein sequence ID" value="BAA35994.1"/>
    <property type="molecule type" value="Genomic_DNA"/>
</dbReference>
<dbReference type="PIR" id="A03545">
    <property type="entry name" value="JWEC"/>
</dbReference>
<dbReference type="RefSeq" id="NP_415676.1">
    <property type="nucleotide sequence ID" value="NC_000913.3"/>
</dbReference>
<dbReference type="RefSeq" id="WP_000905001.1">
    <property type="nucleotide sequence ID" value="NZ_CP064683.1"/>
</dbReference>
<dbReference type="SMR" id="P03014"/>
<dbReference type="BioGRID" id="4262859">
    <property type="interactions" value="145"/>
</dbReference>
<dbReference type="BioGRID" id="850091">
    <property type="interactions" value="1"/>
</dbReference>
<dbReference type="FunCoup" id="P03014">
    <property type="interactions" value="100"/>
</dbReference>
<dbReference type="IntAct" id="P03014">
    <property type="interactions" value="2"/>
</dbReference>
<dbReference type="STRING" id="511145.b1158"/>
<dbReference type="PaxDb" id="511145-b1158"/>
<dbReference type="EnsemblBacteria" id="AAC74242">
    <property type="protein sequence ID" value="AAC74242"/>
    <property type="gene ID" value="b1158"/>
</dbReference>
<dbReference type="GeneID" id="945721"/>
<dbReference type="KEGG" id="ecj:JW1144"/>
<dbReference type="KEGG" id="eco:b1158"/>
<dbReference type="PATRIC" id="fig|511145.12.peg.1199"/>
<dbReference type="EchoBASE" id="EB0730"/>
<dbReference type="eggNOG" id="COG1961">
    <property type="taxonomic scope" value="Bacteria"/>
</dbReference>
<dbReference type="HOGENOM" id="CLU_010686_8_0_6"/>
<dbReference type="InParanoid" id="P03014"/>
<dbReference type="OMA" id="TFEREMM"/>
<dbReference type="PhylomeDB" id="P03014"/>
<dbReference type="BioCyc" id="EcoCyc:EG10737-MONOMER"/>
<dbReference type="BioCyc" id="MetaCyc:EG10737-MONOMER"/>
<dbReference type="PRO" id="PR:P03014"/>
<dbReference type="Proteomes" id="UP000000625">
    <property type="component" value="Chromosome"/>
</dbReference>
<dbReference type="GO" id="GO:0003677">
    <property type="term" value="F:DNA binding"/>
    <property type="evidence" value="ECO:0007669"/>
    <property type="project" value="UniProtKB-KW"/>
</dbReference>
<dbReference type="GO" id="GO:0000150">
    <property type="term" value="F:DNA strand exchange activity"/>
    <property type="evidence" value="ECO:0000315"/>
    <property type="project" value="EcoCyc"/>
</dbReference>
<dbReference type="GO" id="GO:0016787">
    <property type="term" value="F:hydrolase activity"/>
    <property type="evidence" value="ECO:0007669"/>
    <property type="project" value="UniProtKB-KW"/>
</dbReference>
<dbReference type="GO" id="GO:0016874">
    <property type="term" value="F:ligase activity"/>
    <property type="evidence" value="ECO:0007669"/>
    <property type="project" value="UniProtKB-KW"/>
</dbReference>
<dbReference type="GO" id="GO:0015074">
    <property type="term" value="P:DNA integration"/>
    <property type="evidence" value="ECO:0007669"/>
    <property type="project" value="UniProtKB-KW"/>
</dbReference>
<dbReference type="GO" id="GO:0006310">
    <property type="term" value="P:DNA recombination"/>
    <property type="evidence" value="ECO:0000315"/>
    <property type="project" value="EcoCyc"/>
</dbReference>
<dbReference type="CDD" id="cd00569">
    <property type="entry name" value="HTH_Hin_like"/>
    <property type="match status" value="1"/>
</dbReference>
<dbReference type="CDD" id="cd03768">
    <property type="entry name" value="SR_ResInv"/>
    <property type="match status" value="1"/>
</dbReference>
<dbReference type="FunFam" id="3.40.50.1390:FF:000001">
    <property type="entry name" value="DNA recombinase"/>
    <property type="match status" value="1"/>
</dbReference>
<dbReference type="FunFam" id="1.10.10.60:FF:000352">
    <property type="entry name" value="Site-specific DNA recombinase"/>
    <property type="match status" value="1"/>
</dbReference>
<dbReference type="Gene3D" id="1.10.10.60">
    <property type="entry name" value="Homeodomain-like"/>
    <property type="match status" value="1"/>
</dbReference>
<dbReference type="Gene3D" id="3.40.50.1390">
    <property type="entry name" value="Resolvase, N-terminal catalytic domain"/>
    <property type="match status" value="1"/>
</dbReference>
<dbReference type="InterPro" id="IPR009057">
    <property type="entry name" value="Homeodomain-like_sf"/>
</dbReference>
<dbReference type="InterPro" id="IPR006118">
    <property type="entry name" value="Recombinase_CS"/>
</dbReference>
<dbReference type="InterPro" id="IPR006119">
    <property type="entry name" value="Resolv_N"/>
</dbReference>
<dbReference type="InterPro" id="IPR036162">
    <property type="entry name" value="Resolvase-like_N_sf"/>
</dbReference>
<dbReference type="InterPro" id="IPR006120">
    <property type="entry name" value="Resolvase_HTH_dom"/>
</dbReference>
<dbReference type="InterPro" id="IPR050639">
    <property type="entry name" value="SSR_resolvase"/>
</dbReference>
<dbReference type="PANTHER" id="PTHR30461">
    <property type="entry name" value="DNA-INVERTASE FROM LAMBDOID PROPHAGE"/>
    <property type="match status" value="1"/>
</dbReference>
<dbReference type="PANTHER" id="PTHR30461:SF2">
    <property type="entry name" value="SERINE RECOMBINASE PINE-RELATED"/>
    <property type="match status" value="1"/>
</dbReference>
<dbReference type="Pfam" id="PF02796">
    <property type="entry name" value="HTH_7"/>
    <property type="match status" value="1"/>
</dbReference>
<dbReference type="Pfam" id="PF00239">
    <property type="entry name" value="Resolvase"/>
    <property type="match status" value="1"/>
</dbReference>
<dbReference type="SMART" id="SM00857">
    <property type="entry name" value="Resolvase"/>
    <property type="match status" value="1"/>
</dbReference>
<dbReference type="SUPFAM" id="SSF46689">
    <property type="entry name" value="Homeodomain-like"/>
    <property type="match status" value="1"/>
</dbReference>
<dbReference type="SUPFAM" id="SSF53041">
    <property type="entry name" value="Resolvase-like"/>
    <property type="match status" value="1"/>
</dbReference>
<dbReference type="PROSITE" id="PS00397">
    <property type="entry name" value="RECOMBINASES_1"/>
    <property type="match status" value="1"/>
</dbReference>
<dbReference type="PROSITE" id="PS00398">
    <property type="entry name" value="RECOMBINASES_2"/>
    <property type="match status" value="1"/>
</dbReference>
<dbReference type="PROSITE" id="PS51736">
    <property type="entry name" value="RECOMBINASES_3"/>
    <property type="match status" value="1"/>
</dbReference>
<proteinExistence type="inferred from homology"/>
<evidence type="ECO:0000250" key="1">
    <source>
        <dbReference type="UniProtKB" id="P03015"/>
    </source>
</evidence>
<evidence type="ECO:0000255" key="2"/>
<evidence type="ECO:0000255" key="3">
    <source>
        <dbReference type="PROSITE-ProRule" id="PRU01072"/>
    </source>
</evidence>
<evidence type="ECO:0000305" key="4"/>
<reference key="1">
    <citation type="journal article" date="1985" name="EMBO J.">
        <title>The invertible P-DNA segment in the chromosome of Escherichia coli.</title>
        <authorList>
            <person name="Plasterk R.H.A."/>
            <person name="van de Putte P."/>
        </authorList>
    </citation>
    <scope>NUCLEOTIDE SEQUENCE [GENOMIC DNA]</scope>
    <source>
        <strain>K12</strain>
    </source>
</reference>
<reference key="2">
    <citation type="journal article" date="1983" name="Proc. Natl. Acad. Sci. U.S.A.">
        <title>DNA inversions in the chromosome of Escherichia coli and in bacteriophage Mu: relationship to other site-specific recombination systems.</title>
        <authorList>
            <person name="Plasterk R.H.A."/>
            <person name="Brinkman A."/>
            <person name="van de Putte P."/>
        </authorList>
    </citation>
    <scope>NUCLEOTIDE SEQUENCE [GENOMIC DNA]</scope>
    <source>
        <strain>K12</strain>
    </source>
</reference>
<reference key="3">
    <citation type="journal article" date="1996" name="DNA Res.">
        <title>A 718-kb DNA sequence of the Escherichia coli K-12 genome corresponding to the 12.7-28.0 min region on the linkage map.</title>
        <authorList>
            <person name="Oshima T."/>
            <person name="Aiba H."/>
            <person name="Baba T."/>
            <person name="Fujita K."/>
            <person name="Hayashi K."/>
            <person name="Honjo A."/>
            <person name="Ikemoto K."/>
            <person name="Inada T."/>
            <person name="Itoh T."/>
            <person name="Kajihara M."/>
            <person name="Kanai K."/>
            <person name="Kashimoto K."/>
            <person name="Kimura S."/>
            <person name="Kitagawa M."/>
            <person name="Makino K."/>
            <person name="Masuda S."/>
            <person name="Miki T."/>
            <person name="Mizobuchi K."/>
            <person name="Mori H."/>
            <person name="Motomura K."/>
            <person name="Nakamura Y."/>
            <person name="Nashimoto H."/>
            <person name="Nishio Y."/>
            <person name="Saito N."/>
            <person name="Sampei G."/>
            <person name="Seki Y."/>
            <person name="Tagami H."/>
            <person name="Takemoto K."/>
            <person name="Wada C."/>
            <person name="Yamamoto Y."/>
            <person name="Yano M."/>
            <person name="Horiuchi T."/>
        </authorList>
    </citation>
    <scope>NUCLEOTIDE SEQUENCE [LARGE SCALE GENOMIC DNA]</scope>
    <source>
        <strain>K12 / W3110 / ATCC 27325 / DSM 5911</strain>
    </source>
</reference>
<reference key="4">
    <citation type="journal article" date="1997" name="Science">
        <title>The complete genome sequence of Escherichia coli K-12.</title>
        <authorList>
            <person name="Blattner F.R."/>
            <person name="Plunkett G. III"/>
            <person name="Bloch C.A."/>
            <person name="Perna N.T."/>
            <person name="Burland V."/>
            <person name="Riley M."/>
            <person name="Collado-Vides J."/>
            <person name="Glasner J.D."/>
            <person name="Rode C.K."/>
            <person name="Mayhew G.F."/>
            <person name="Gregor J."/>
            <person name="Davis N.W."/>
            <person name="Kirkpatrick H.A."/>
            <person name="Goeden M.A."/>
            <person name="Rose D.J."/>
            <person name="Mau B."/>
            <person name="Shao Y."/>
        </authorList>
    </citation>
    <scope>NUCLEOTIDE SEQUENCE [LARGE SCALE GENOMIC DNA]</scope>
    <source>
        <strain>K12 / MG1655 / ATCC 47076</strain>
    </source>
</reference>
<reference key="5">
    <citation type="journal article" date="2006" name="Mol. Syst. Biol.">
        <title>Highly accurate genome sequences of Escherichia coli K-12 strains MG1655 and W3110.</title>
        <authorList>
            <person name="Hayashi K."/>
            <person name="Morooka N."/>
            <person name="Yamamoto Y."/>
            <person name="Fujita K."/>
            <person name="Isono K."/>
            <person name="Choi S."/>
            <person name="Ohtsubo E."/>
            <person name="Baba T."/>
            <person name="Wanner B.L."/>
            <person name="Mori H."/>
            <person name="Horiuchi T."/>
        </authorList>
    </citation>
    <scope>NUCLEOTIDE SEQUENCE [LARGE SCALE GENOMIC DNA]</scope>
    <source>
        <strain>K12 / W3110 / ATCC 27325 / DSM 5911</strain>
    </source>
</reference>
<name>PINE_ECOLI</name>
<sequence length="184" mass="20573">MLIGYVRVSTNDQNTDLQRNALNCAGCELIFEDKISGTKSERPGLKKLLRTLSAGDTLVVWKLDRLGRSMRHLVVLVEELRERGINFRSLTDSIDTSTPMGRFFFHVMGALAEMERELIVERTKAGLETARAQGRIGGRRPKLTPEQWAQAGRLIAAGTPRQKVAIIYDVGVSTLYKRFPAGDK</sequence>
<organism>
    <name type="scientific">Escherichia coli (strain K12)</name>
    <dbReference type="NCBI Taxonomy" id="83333"/>
    <lineage>
        <taxon>Bacteria</taxon>
        <taxon>Pseudomonadati</taxon>
        <taxon>Pseudomonadota</taxon>
        <taxon>Gammaproteobacteria</taxon>
        <taxon>Enterobacterales</taxon>
        <taxon>Enterobacteriaceae</taxon>
        <taxon>Escherichia</taxon>
    </lineage>
</organism>